<protein>
    <recommendedName>
        <fullName>Transmembrane protein 163</fullName>
    </recommendedName>
</protein>
<accession>Q6GLN7</accession>
<keyword id="KW-0968">Cytoplasmic vesicle</keyword>
<keyword id="KW-0967">Endosome</keyword>
<keyword id="KW-0472">Membrane</keyword>
<keyword id="KW-1185">Reference proteome</keyword>
<keyword id="KW-0770">Synapse</keyword>
<keyword id="KW-0812">Transmembrane</keyword>
<keyword id="KW-1133">Transmembrane helix</keyword>
<keyword id="KW-0862">Zinc</keyword>
<feature type="chain" id="PRO_0000278541" description="Transmembrane protein 163">
    <location>
        <begin position="1"/>
        <end position="281"/>
    </location>
</feature>
<feature type="topological domain" description="Cytoplasmic" evidence="2">
    <location>
        <begin position="1"/>
        <end position="80"/>
    </location>
</feature>
<feature type="transmembrane region" description="Helical" evidence="2">
    <location>
        <begin position="81"/>
        <end position="101"/>
    </location>
</feature>
<feature type="topological domain" description="Extracellular" evidence="2">
    <location>
        <begin position="102"/>
        <end position="108"/>
    </location>
</feature>
<feature type="transmembrane region" description="Helical" evidence="2">
    <location>
        <begin position="109"/>
        <end position="129"/>
    </location>
</feature>
<feature type="topological domain" description="Cytoplasmic" evidence="2">
    <location>
        <begin position="130"/>
        <end position="145"/>
    </location>
</feature>
<feature type="transmembrane region" description="Helical" evidence="2">
    <location>
        <begin position="146"/>
        <end position="166"/>
    </location>
</feature>
<feature type="topological domain" description="Extracellular" evidence="2">
    <location>
        <begin position="167"/>
        <end position="179"/>
    </location>
</feature>
<feature type="transmembrane region" description="Helical" evidence="2">
    <location>
        <begin position="180"/>
        <end position="200"/>
    </location>
</feature>
<feature type="topological domain" description="Cytoplasmic" evidence="2">
    <location>
        <begin position="201"/>
        <end position="209"/>
    </location>
</feature>
<feature type="transmembrane region" description="Helical" evidence="2">
    <location>
        <begin position="210"/>
        <end position="230"/>
    </location>
</feature>
<feature type="topological domain" description="Extracellular" evidence="2">
    <location>
        <begin position="231"/>
        <end position="240"/>
    </location>
</feature>
<feature type="transmembrane region" description="Helical" evidence="2">
    <location>
        <begin position="241"/>
        <end position="261"/>
    </location>
</feature>
<feature type="topological domain" description="Cytoplasmic" evidence="2">
    <location>
        <begin position="262"/>
        <end position="281"/>
    </location>
</feature>
<feature type="region of interest" description="Disordered" evidence="3">
    <location>
        <begin position="16"/>
        <end position="44"/>
    </location>
</feature>
<gene>
    <name type="primary">tmem163</name>
</gene>
<dbReference type="EMBL" id="BC074423">
    <property type="protein sequence ID" value="AAH74423.1"/>
    <property type="molecule type" value="mRNA"/>
</dbReference>
<dbReference type="RefSeq" id="NP_001086283.1">
    <property type="nucleotide sequence ID" value="NM_001092814.1"/>
</dbReference>
<dbReference type="SMR" id="Q6GLN7"/>
<dbReference type="DNASU" id="444712"/>
<dbReference type="GeneID" id="444712"/>
<dbReference type="KEGG" id="xla:444712"/>
<dbReference type="AGR" id="Xenbase:XB-GENE-5808429"/>
<dbReference type="CTD" id="444712"/>
<dbReference type="Xenbase" id="XB-GENE-5808429">
    <property type="gene designation" value="tmem163.L"/>
</dbReference>
<dbReference type="OMA" id="IMRYSAS"/>
<dbReference type="OrthoDB" id="5980560at2759"/>
<dbReference type="Proteomes" id="UP000186698">
    <property type="component" value="Chromosome 9_10L"/>
</dbReference>
<dbReference type="Bgee" id="444712">
    <property type="expression patterns" value="Expressed in brain and 6 other cell types or tissues"/>
</dbReference>
<dbReference type="GO" id="GO:0031901">
    <property type="term" value="C:early endosome membrane"/>
    <property type="evidence" value="ECO:0000250"/>
    <property type="project" value="UniProtKB"/>
</dbReference>
<dbReference type="GO" id="GO:0030672">
    <property type="term" value="C:synaptic vesicle membrane"/>
    <property type="evidence" value="ECO:0000250"/>
    <property type="project" value="UniProtKB"/>
</dbReference>
<dbReference type="GO" id="GO:0008270">
    <property type="term" value="F:zinc ion binding"/>
    <property type="evidence" value="ECO:0000250"/>
    <property type="project" value="UniProtKB"/>
</dbReference>
<dbReference type="FunFam" id="1.20.1510.10:FF:000018">
    <property type="entry name" value="transmembrane protein 163"/>
    <property type="match status" value="1"/>
</dbReference>
<dbReference type="Gene3D" id="1.20.1510.10">
    <property type="entry name" value="Cation efflux protein transmembrane domain"/>
    <property type="match status" value="1"/>
</dbReference>
<dbReference type="InterPro" id="IPR027469">
    <property type="entry name" value="Cation_efflux_TMD_sf"/>
</dbReference>
<dbReference type="InterPro" id="IPR026765">
    <property type="entry name" value="Tmem163"/>
</dbReference>
<dbReference type="PANTHER" id="PTHR31937">
    <property type="entry name" value="TRANSMEMBRANE PROTEIN 163"/>
    <property type="match status" value="1"/>
</dbReference>
<dbReference type="PANTHER" id="PTHR31937:SF2">
    <property type="entry name" value="TRANSMEMBRANE PROTEIN 163"/>
    <property type="match status" value="1"/>
</dbReference>
<dbReference type="SUPFAM" id="SSF161111">
    <property type="entry name" value="Cation efflux protein transmembrane domain-like"/>
    <property type="match status" value="1"/>
</dbReference>
<evidence type="ECO:0000250" key="1"/>
<evidence type="ECO:0000255" key="2"/>
<evidence type="ECO:0000256" key="3">
    <source>
        <dbReference type="SAM" id="MobiDB-lite"/>
    </source>
</evidence>
<evidence type="ECO:0000305" key="4"/>
<comment type="function">
    <text evidence="1">May bind zinc and other divalent cations and recruit them to vesicular organelles.</text>
</comment>
<comment type="subcellular location">
    <subcellularLocation>
        <location evidence="1">Cytoplasmic vesicle</location>
        <location evidence="1">Secretory vesicle</location>
        <location evidence="1">Synaptic vesicle membrane</location>
        <topology evidence="1">Multi-pass membrane protein</topology>
    </subcellularLocation>
    <subcellularLocation>
        <location evidence="1">Early endosome membrane</location>
    </subcellularLocation>
</comment>
<comment type="similarity">
    <text evidence="4">Belongs to the TMEM163 family.</text>
</comment>
<organism>
    <name type="scientific">Xenopus laevis</name>
    <name type="common">African clawed frog</name>
    <dbReference type="NCBI Taxonomy" id="8355"/>
    <lineage>
        <taxon>Eukaryota</taxon>
        <taxon>Metazoa</taxon>
        <taxon>Chordata</taxon>
        <taxon>Craniata</taxon>
        <taxon>Vertebrata</taxon>
        <taxon>Euteleostomi</taxon>
        <taxon>Amphibia</taxon>
        <taxon>Batrachia</taxon>
        <taxon>Anura</taxon>
        <taxon>Pipoidea</taxon>
        <taxon>Pipidae</taxon>
        <taxon>Xenopodinae</taxon>
        <taxon>Xenopus</taxon>
        <taxon>Xenopus</taxon>
    </lineage>
</organism>
<proteinExistence type="evidence at transcript level"/>
<sequence length="281" mass="31056">MEPLDTELCYDPDPSIVQPSCNGQTPPGHRTLSPTQQMDHEQQMKISESGQFSDVVENRGLLESSTRLKPHEAQNYRKKALWVSWLSIAITLILAIAAFTVSVMRYSASSFGFALDAVLDVLSSAIVLWRYSNAAAVHSAHREYMACCILGVIFLLSSICIVSKAIHDLSIRVMPEVDGFLFSVSILSGILCSLLAAIKFMLGKVLTSRALITDGFNSLVGGIMGFSILLSAEVYKHNSKVWYLDGSVGILIGLIIMSYGIKLLMDMVPRVRQTRHYEMFE</sequence>
<name>TM163_XENLA</name>
<reference key="1">
    <citation type="submission" date="2004-06" db="EMBL/GenBank/DDBJ databases">
        <authorList>
            <consortium name="NIH - Xenopus Gene Collection (XGC) project"/>
        </authorList>
    </citation>
    <scope>NUCLEOTIDE SEQUENCE [LARGE SCALE MRNA]</scope>
    <source>
        <tissue>Eye</tissue>
    </source>
</reference>